<comment type="function">
    <text evidence="1">Member of the two-component regulatory system PhoQ/PhoP which regulates the expression of genes involved in virulence and resistance to host defense antimicrobial peptides.</text>
</comment>
<comment type="subcellular location">
    <subcellularLocation>
        <location evidence="4">Cytoplasm</location>
    </subcellularLocation>
</comment>
<comment type="PTM">
    <text evidence="4">Phosphorylated by PhoQ.</text>
</comment>
<dbReference type="EMBL" id="AE017220">
    <property type="protein sequence ID" value="AAX65088.1"/>
    <property type="molecule type" value="Genomic_DNA"/>
</dbReference>
<dbReference type="SMR" id="Q57QC3"/>
<dbReference type="KEGG" id="sec:SCH_1182"/>
<dbReference type="HOGENOM" id="CLU_000445_30_1_6"/>
<dbReference type="Proteomes" id="UP000000538">
    <property type="component" value="Chromosome"/>
</dbReference>
<dbReference type="GO" id="GO:0005829">
    <property type="term" value="C:cytosol"/>
    <property type="evidence" value="ECO:0007669"/>
    <property type="project" value="TreeGrafter"/>
</dbReference>
<dbReference type="GO" id="GO:0032993">
    <property type="term" value="C:protein-DNA complex"/>
    <property type="evidence" value="ECO:0007669"/>
    <property type="project" value="TreeGrafter"/>
</dbReference>
<dbReference type="GO" id="GO:0000156">
    <property type="term" value="F:phosphorelay response regulator activity"/>
    <property type="evidence" value="ECO:0007669"/>
    <property type="project" value="TreeGrafter"/>
</dbReference>
<dbReference type="GO" id="GO:0000976">
    <property type="term" value="F:transcription cis-regulatory region binding"/>
    <property type="evidence" value="ECO:0007669"/>
    <property type="project" value="TreeGrafter"/>
</dbReference>
<dbReference type="GO" id="GO:0006355">
    <property type="term" value="P:regulation of DNA-templated transcription"/>
    <property type="evidence" value="ECO:0007669"/>
    <property type="project" value="InterPro"/>
</dbReference>
<dbReference type="CDD" id="cd19934">
    <property type="entry name" value="REC_OmpR_EcPhoP-like"/>
    <property type="match status" value="1"/>
</dbReference>
<dbReference type="CDD" id="cd00383">
    <property type="entry name" value="trans_reg_C"/>
    <property type="match status" value="1"/>
</dbReference>
<dbReference type="FunFam" id="3.40.50.2300:FF:000002">
    <property type="entry name" value="DNA-binding response regulator PhoP"/>
    <property type="match status" value="1"/>
</dbReference>
<dbReference type="FunFam" id="1.10.10.10:FF:000098">
    <property type="entry name" value="Two-component system response regulator PhoP"/>
    <property type="match status" value="1"/>
</dbReference>
<dbReference type="Gene3D" id="3.40.50.2300">
    <property type="match status" value="1"/>
</dbReference>
<dbReference type="Gene3D" id="6.10.250.690">
    <property type="match status" value="1"/>
</dbReference>
<dbReference type="Gene3D" id="1.10.10.10">
    <property type="entry name" value="Winged helix-like DNA-binding domain superfamily/Winged helix DNA-binding domain"/>
    <property type="match status" value="1"/>
</dbReference>
<dbReference type="InterPro" id="IPR011006">
    <property type="entry name" value="CheY-like_superfamily"/>
</dbReference>
<dbReference type="InterPro" id="IPR001867">
    <property type="entry name" value="OmpR/PhoB-type_DNA-bd"/>
</dbReference>
<dbReference type="InterPro" id="IPR001789">
    <property type="entry name" value="Sig_transdc_resp-reg_receiver"/>
</dbReference>
<dbReference type="InterPro" id="IPR039420">
    <property type="entry name" value="WalR-like"/>
</dbReference>
<dbReference type="InterPro" id="IPR036388">
    <property type="entry name" value="WH-like_DNA-bd_sf"/>
</dbReference>
<dbReference type="NCBIfam" id="NF008078">
    <property type="entry name" value="PRK10816.1"/>
    <property type="match status" value="1"/>
</dbReference>
<dbReference type="PANTHER" id="PTHR48111">
    <property type="entry name" value="REGULATOR OF RPOS"/>
    <property type="match status" value="1"/>
</dbReference>
<dbReference type="PANTHER" id="PTHR48111:SF71">
    <property type="entry name" value="TRANSCRIPTIONAL REGULATORY PROTEIN PHOP"/>
    <property type="match status" value="1"/>
</dbReference>
<dbReference type="Pfam" id="PF00072">
    <property type="entry name" value="Response_reg"/>
    <property type="match status" value="1"/>
</dbReference>
<dbReference type="Pfam" id="PF00486">
    <property type="entry name" value="Trans_reg_C"/>
    <property type="match status" value="1"/>
</dbReference>
<dbReference type="SMART" id="SM00448">
    <property type="entry name" value="REC"/>
    <property type="match status" value="1"/>
</dbReference>
<dbReference type="SMART" id="SM00862">
    <property type="entry name" value="Trans_reg_C"/>
    <property type="match status" value="1"/>
</dbReference>
<dbReference type="SUPFAM" id="SSF52172">
    <property type="entry name" value="CheY-like"/>
    <property type="match status" value="1"/>
</dbReference>
<dbReference type="PROSITE" id="PS51755">
    <property type="entry name" value="OMPR_PHOB"/>
    <property type="match status" value="1"/>
</dbReference>
<dbReference type="PROSITE" id="PS50110">
    <property type="entry name" value="RESPONSE_REGULATORY"/>
    <property type="match status" value="1"/>
</dbReference>
<sequence>MMRVLVVEDNALLRHHLKVQLQDSGHQVDATEDAREADYYLNEHLPDIAIVDLGLPDEDGLSLIRRWRSSDISLPVLVLTAREGWQDKVEVLSSGADDYVTKPFHIEEVMARMQALMRRNSGLASQVINIPPFQVDLSRRELSVNEEVIKLTAFEYTIMETLIRNNGKVVSKDSLMLQLYPDAELRESHTIDVLMGRLRKKIQAQYPHDVITTVRGQGYLFELR</sequence>
<organism>
    <name type="scientific">Salmonella choleraesuis (strain SC-B67)</name>
    <dbReference type="NCBI Taxonomy" id="321314"/>
    <lineage>
        <taxon>Bacteria</taxon>
        <taxon>Pseudomonadati</taxon>
        <taxon>Pseudomonadota</taxon>
        <taxon>Gammaproteobacteria</taxon>
        <taxon>Enterobacterales</taxon>
        <taxon>Enterobacteriaceae</taxon>
        <taxon>Salmonella</taxon>
    </lineage>
</organism>
<reference key="1">
    <citation type="journal article" date="2005" name="Nucleic Acids Res.">
        <title>The genome sequence of Salmonella enterica serovar Choleraesuis, a highly invasive and resistant zoonotic pathogen.</title>
        <authorList>
            <person name="Chiu C.-H."/>
            <person name="Tang P."/>
            <person name="Chu C."/>
            <person name="Hu S."/>
            <person name="Bao Q."/>
            <person name="Yu J."/>
            <person name="Chou Y.-Y."/>
            <person name="Wang H.-S."/>
            <person name="Lee Y.-S."/>
        </authorList>
    </citation>
    <scope>NUCLEOTIDE SEQUENCE [LARGE SCALE GENOMIC DNA]</scope>
    <source>
        <strain>SC-B67</strain>
    </source>
</reference>
<evidence type="ECO:0000250" key="1"/>
<evidence type="ECO:0000255" key="2">
    <source>
        <dbReference type="PROSITE-ProRule" id="PRU00169"/>
    </source>
</evidence>
<evidence type="ECO:0000255" key="3">
    <source>
        <dbReference type="PROSITE-ProRule" id="PRU01091"/>
    </source>
</evidence>
<evidence type="ECO:0000305" key="4"/>
<accession>Q57QC3</accession>
<gene>
    <name type="primary">phoP</name>
    <name type="ordered locus">SCH_1182</name>
</gene>
<keyword id="KW-0010">Activator</keyword>
<keyword id="KW-0963">Cytoplasm</keyword>
<keyword id="KW-0238">DNA-binding</keyword>
<keyword id="KW-0341">Growth regulation</keyword>
<keyword id="KW-0597">Phosphoprotein</keyword>
<keyword id="KW-0678">Repressor</keyword>
<keyword id="KW-0804">Transcription</keyword>
<keyword id="KW-0805">Transcription regulation</keyword>
<keyword id="KW-0902">Two-component regulatory system</keyword>
<keyword id="KW-0843">Virulence</keyword>
<feature type="chain" id="PRO_0000081198" description="Virulence transcriptional regulatory protein PhoP">
    <location>
        <begin position="1"/>
        <end position="224"/>
    </location>
</feature>
<feature type="domain" description="Response regulatory" evidence="2">
    <location>
        <begin position="3"/>
        <end position="117"/>
    </location>
</feature>
<feature type="DNA-binding region" description="OmpR/PhoB-type" evidence="3">
    <location>
        <begin position="125"/>
        <end position="223"/>
    </location>
</feature>
<feature type="modified residue" description="4-aspartylphosphate" evidence="2">
    <location>
        <position position="52"/>
    </location>
</feature>
<proteinExistence type="inferred from homology"/>
<protein>
    <recommendedName>
        <fullName>Virulence transcriptional regulatory protein PhoP</fullName>
    </recommendedName>
</protein>
<name>PHOP_SALCH</name>